<comment type="function">
    <text evidence="1">Putative quercetin 2,3-dioxygenase.</text>
</comment>
<comment type="catalytic activity">
    <reaction>
        <text>quercetin + O2 = 2-(3,4-dihydroxybenzoyloxy)-4,6-dihydroxybenzoate + CO</text>
        <dbReference type="Rhea" id="RHEA:15381"/>
        <dbReference type="ChEBI" id="CHEBI:15379"/>
        <dbReference type="ChEBI" id="CHEBI:17245"/>
        <dbReference type="ChEBI" id="CHEBI:57628"/>
        <dbReference type="ChEBI" id="CHEBI:57694"/>
        <dbReference type="EC" id="1.13.11.24"/>
    </reaction>
</comment>
<comment type="cofactor">
    <cofactor evidence="1">
        <name>a divalent metal cation</name>
        <dbReference type="ChEBI" id="CHEBI:60240"/>
    </cofactor>
    <text evidence="1">Binds 1 divalent metal cation.</text>
</comment>
<comment type="pathway">
    <text>Flavonoid metabolism; quercetin degradation.</text>
</comment>
<comment type="similarity">
    <text evidence="2">Belongs to the pirin family.</text>
</comment>
<reference key="1">
    <citation type="journal article" date="2000" name="Nature">
        <title>Complete genome sequence of Pseudomonas aeruginosa PAO1, an opportunistic pathogen.</title>
        <authorList>
            <person name="Stover C.K."/>
            <person name="Pham X.-Q.T."/>
            <person name="Erwin A.L."/>
            <person name="Mizoguchi S.D."/>
            <person name="Warrener P."/>
            <person name="Hickey M.J."/>
            <person name="Brinkman F.S.L."/>
            <person name="Hufnagle W.O."/>
            <person name="Kowalik D.J."/>
            <person name="Lagrou M."/>
            <person name="Garber R.L."/>
            <person name="Goltry L."/>
            <person name="Tolentino E."/>
            <person name="Westbrock-Wadman S."/>
            <person name="Yuan Y."/>
            <person name="Brody L.L."/>
            <person name="Coulter S.N."/>
            <person name="Folger K.R."/>
            <person name="Kas A."/>
            <person name="Larbig K."/>
            <person name="Lim R.M."/>
            <person name="Smith K.A."/>
            <person name="Spencer D.H."/>
            <person name="Wong G.K.-S."/>
            <person name="Wu Z."/>
            <person name="Paulsen I.T."/>
            <person name="Reizer J."/>
            <person name="Saier M.H. Jr."/>
            <person name="Hancock R.E.W."/>
            <person name="Lory S."/>
            <person name="Olson M.V."/>
        </authorList>
    </citation>
    <scope>NUCLEOTIDE SEQUENCE [LARGE SCALE GENOMIC DNA]</scope>
    <source>
        <strain>ATCC 15692 / DSM 22644 / CIP 104116 / JCM 14847 / LMG 12228 / 1C / PRS 101 / PAO1</strain>
    </source>
</reference>
<name>Y3240_PSEAE</name>
<proteinExistence type="inferred from homology"/>
<keyword id="KW-0223">Dioxygenase</keyword>
<keyword id="KW-0479">Metal-binding</keyword>
<keyword id="KW-0560">Oxidoreductase</keyword>
<keyword id="KW-1185">Reference proteome</keyword>
<evidence type="ECO:0000250" key="1"/>
<evidence type="ECO:0000305" key="2"/>
<gene>
    <name type="ordered locus">PA3240</name>
</gene>
<feature type="chain" id="PRO_0000214071" description="Putative quercetin 2,3-dioxygenase PA3240">
    <location>
        <begin position="1"/>
        <end position="285"/>
    </location>
</feature>
<feature type="binding site" evidence="1">
    <location>
        <position position="60"/>
    </location>
    <ligand>
        <name>a divalent metal cation</name>
        <dbReference type="ChEBI" id="CHEBI:60240"/>
    </ligand>
</feature>
<feature type="binding site" evidence="1">
    <location>
        <position position="62"/>
    </location>
    <ligand>
        <name>a divalent metal cation</name>
        <dbReference type="ChEBI" id="CHEBI:60240"/>
    </ligand>
</feature>
<feature type="binding site" evidence="1">
    <location>
        <position position="104"/>
    </location>
    <ligand>
        <name>a divalent metal cation</name>
        <dbReference type="ChEBI" id="CHEBI:60240"/>
    </ligand>
</feature>
<feature type="binding site" evidence="1">
    <location>
        <position position="106"/>
    </location>
    <ligand>
        <name>a divalent metal cation</name>
        <dbReference type="ChEBI" id="CHEBI:60240"/>
    </ligand>
</feature>
<organism>
    <name type="scientific">Pseudomonas aeruginosa (strain ATCC 15692 / DSM 22644 / CIP 104116 / JCM 14847 / LMG 12228 / 1C / PRS 101 / PAO1)</name>
    <dbReference type="NCBI Taxonomy" id="208964"/>
    <lineage>
        <taxon>Bacteria</taxon>
        <taxon>Pseudomonadati</taxon>
        <taxon>Pseudomonadota</taxon>
        <taxon>Gammaproteobacteria</taxon>
        <taxon>Pseudomonadales</taxon>
        <taxon>Pseudomonadaceae</taxon>
        <taxon>Pseudomonas</taxon>
    </lineage>
</organism>
<sequence>MTRYRDVLELHTGHPASDGAGVRLTRVIGGPSPERFDPFLMLDQFDTQNPDDYVAGFPSHPHRGFETVTYMLEGRMRHEDHLGNRGLLKPGGVQWMTAAHGIIHSEMPEQVEGAMRGFQLWVNLPAKNKLAPAGYRDIEPEDVPRLETAGGVKVTVIAGRFDDGQAQQIGAVERPDTEPHYYDLQLPAGGRIAPRLPDGHRVLLYVYEGSLTVEGERPVEIATNRLARLSEEGELSLRSEAGARVLVLAGKPLHEPIVQYGPFVMNSREEIEQALRDYRDGVLAV</sequence>
<protein>
    <recommendedName>
        <fullName>Putative quercetin 2,3-dioxygenase PA3240</fullName>
        <shortName>Putative quercetinase</shortName>
        <ecNumber>1.13.11.24</ecNumber>
    </recommendedName>
    <alternativeName>
        <fullName>Pirin-like protein PA3240</fullName>
    </alternativeName>
</protein>
<accession>Q9HZ00</accession>
<dbReference type="EC" id="1.13.11.24"/>
<dbReference type="EMBL" id="AE004091">
    <property type="protein sequence ID" value="AAG06628.1"/>
    <property type="molecule type" value="Genomic_DNA"/>
</dbReference>
<dbReference type="PIR" id="B83239">
    <property type="entry name" value="B83239"/>
</dbReference>
<dbReference type="RefSeq" id="NP_251930.1">
    <property type="nucleotide sequence ID" value="NC_002516.2"/>
</dbReference>
<dbReference type="RefSeq" id="WP_003114805.1">
    <property type="nucleotide sequence ID" value="NZ_QZGE01000019.1"/>
</dbReference>
<dbReference type="SMR" id="Q9HZ00"/>
<dbReference type="STRING" id="208964.PA3240"/>
<dbReference type="PaxDb" id="208964-PA3240"/>
<dbReference type="DNASU" id="882403"/>
<dbReference type="GeneID" id="882403"/>
<dbReference type="KEGG" id="pae:PA3240"/>
<dbReference type="PATRIC" id="fig|208964.12.peg.3387"/>
<dbReference type="PseudoCAP" id="PA3240"/>
<dbReference type="HOGENOM" id="CLU_045717_5_0_6"/>
<dbReference type="InParanoid" id="Q9HZ00"/>
<dbReference type="OrthoDB" id="9780903at2"/>
<dbReference type="PhylomeDB" id="Q9HZ00"/>
<dbReference type="BioCyc" id="PAER208964:G1FZ6-3299-MONOMER"/>
<dbReference type="UniPathway" id="UPA00724"/>
<dbReference type="Proteomes" id="UP000002438">
    <property type="component" value="Chromosome"/>
</dbReference>
<dbReference type="GO" id="GO:0046872">
    <property type="term" value="F:metal ion binding"/>
    <property type="evidence" value="ECO:0007669"/>
    <property type="project" value="UniProtKB-KW"/>
</dbReference>
<dbReference type="GO" id="GO:0008127">
    <property type="term" value="F:quercetin 2,3-dioxygenase activity"/>
    <property type="evidence" value="ECO:0007669"/>
    <property type="project" value="UniProtKB-EC"/>
</dbReference>
<dbReference type="CDD" id="cd02247">
    <property type="entry name" value="cupin_pirin_C"/>
    <property type="match status" value="1"/>
</dbReference>
<dbReference type="CDD" id="cd02909">
    <property type="entry name" value="cupin_pirin_N"/>
    <property type="match status" value="1"/>
</dbReference>
<dbReference type="Gene3D" id="2.60.120.10">
    <property type="entry name" value="Jelly Rolls"/>
    <property type="match status" value="2"/>
</dbReference>
<dbReference type="InterPro" id="IPR012093">
    <property type="entry name" value="Pirin"/>
</dbReference>
<dbReference type="InterPro" id="IPR008778">
    <property type="entry name" value="Pirin_C_dom"/>
</dbReference>
<dbReference type="InterPro" id="IPR003829">
    <property type="entry name" value="Pirin_N_dom"/>
</dbReference>
<dbReference type="InterPro" id="IPR014710">
    <property type="entry name" value="RmlC-like_jellyroll"/>
</dbReference>
<dbReference type="InterPro" id="IPR011051">
    <property type="entry name" value="RmlC_Cupin_sf"/>
</dbReference>
<dbReference type="PANTHER" id="PTHR13903:SF8">
    <property type="entry name" value="PIRIN"/>
    <property type="match status" value="1"/>
</dbReference>
<dbReference type="PANTHER" id="PTHR13903">
    <property type="entry name" value="PIRIN-RELATED"/>
    <property type="match status" value="1"/>
</dbReference>
<dbReference type="Pfam" id="PF02678">
    <property type="entry name" value="Pirin"/>
    <property type="match status" value="1"/>
</dbReference>
<dbReference type="Pfam" id="PF05726">
    <property type="entry name" value="Pirin_C"/>
    <property type="match status" value="1"/>
</dbReference>
<dbReference type="PIRSF" id="PIRSF006232">
    <property type="entry name" value="Pirin"/>
    <property type="match status" value="1"/>
</dbReference>
<dbReference type="SUPFAM" id="SSF51182">
    <property type="entry name" value="RmlC-like cupins"/>
    <property type="match status" value="1"/>
</dbReference>